<evidence type="ECO:0000255" key="1">
    <source>
        <dbReference type="HAMAP-Rule" id="MF_00019"/>
    </source>
</evidence>
<gene>
    <name evidence="1" type="primary">plsX</name>
    <name type="ordered locus">Mpe_A0635</name>
</gene>
<protein>
    <recommendedName>
        <fullName evidence="1">Phosphate acyltransferase</fullName>
        <ecNumber evidence="1">2.3.1.274</ecNumber>
    </recommendedName>
    <alternativeName>
        <fullName evidence="1">Acyl-ACP phosphotransacylase</fullName>
    </alternativeName>
    <alternativeName>
        <fullName evidence="1">Acyl-[acyl-carrier-protein]--phosphate acyltransferase</fullName>
    </alternativeName>
    <alternativeName>
        <fullName evidence="1">Phosphate-acyl-ACP acyltransferase</fullName>
    </alternativeName>
</protein>
<accession>A2SDF8</accession>
<keyword id="KW-0963">Cytoplasm</keyword>
<keyword id="KW-0444">Lipid biosynthesis</keyword>
<keyword id="KW-0443">Lipid metabolism</keyword>
<keyword id="KW-0594">Phospholipid biosynthesis</keyword>
<keyword id="KW-1208">Phospholipid metabolism</keyword>
<keyword id="KW-1185">Reference proteome</keyword>
<keyword id="KW-0808">Transferase</keyword>
<sequence>MNDPLASAAEARSATVRLAVDCMGGDHGPSVTLPACRAFLAAHPGAELLLVGRPEALAPAAGWERCTLVSASEVVAMDDPVEVALRRKRDSSLRVAISQVKPVDGVAAAQACVSAGNTGALMAVARYVLKTLDGIDRPAIATVMPNQLDGHTTVLDLGANVDCTAEHLLQFAVMGSALVAAVEGKANPSVGLLNIGEEAIKGSETIKRAGELLRAAAAGGQLNFVGNVEGNDIFTGRTDIVVCDGFVGNVALKTAEGLASMLSSFIRQEFTRSWYSKLAALVALPVLRHFKNRVDHRRYNGAALLGLRGLVFKSHGSADAFAFEQALNRAYDAARNRLLDRVHDRISATLQALPADAGAPDGQVPEAA</sequence>
<dbReference type="EC" id="2.3.1.274" evidence="1"/>
<dbReference type="EMBL" id="CP000555">
    <property type="protein sequence ID" value="ABM93597.1"/>
    <property type="molecule type" value="Genomic_DNA"/>
</dbReference>
<dbReference type="RefSeq" id="WP_011828235.1">
    <property type="nucleotide sequence ID" value="NC_008825.1"/>
</dbReference>
<dbReference type="SMR" id="A2SDF8"/>
<dbReference type="STRING" id="420662.Mpe_A0635"/>
<dbReference type="KEGG" id="mpt:Mpe_A0635"/>
<dbReference type="eggNOG" id="COG0416">
    <property type="taxonomic scope" value="Bacteria"/>
</dbReference>
<dbReference type="HOGENOM" id="CLU_039379_1_0_4"/>
<dbReference type="UniPathway" id="UPA00085"/>
<dbReference type="Proteomes" id="UP000000366">
    <property type="component" value="Chromosome"/>
</dbReference>
<dbReference type="GO" id="GO:0005737">
    <property type="term" value="C:cytoplasm"/>
    <property type="evidence" value="ECO:0007669"/>
    <property type="project" value="UniProtKB-SubCell"/>
</dbReference>
<dbReference type="GO" id="GO:0043811">
    <property type="term" value="F:phosphate:acyl-[acyl carrier protein] acyltransferase activity"/>
    <property type="evidence" value="ECO:0007669"/>
    <property type="project" value="UniProtKB-UniRule"/>
</dbReference>
<dbReference type="GO" id="GO:0006633">
    <property type="term" value="P:fatty acid biosynthetic process"/>
    <property type="evidence" value="ECO:0007669"/>
    <property type="project" value="UniProtKB-UniRule"/>
</dbReference>
<dbReference type="GO" id="GO:0008654">
    <property type="term" value="P:phospholipid biosynthetic process"/>
    <property type="evidence" value="ECO:0007669"/>
    <property type="project" value="UniProtKB-KW"/>
</dbReference>
<dbReference type="Gene3D" id="3.40.718.10">
    <property type="entry name" value="Isopropylmalate Dehydrogenase"/>
    <property type="match status" value="1"/>
</dbReference>
<dbReference type="HAMAP" id="MF_00019">
    <property type="entry name" value="PlsX"/>
    <property type="match status" value="1"/>
</dbReference>
<dbReference type="InterPro" id="IPR003664">
    <property type="entry name" value="FA_synthesis"/>
</dbReference>
<dbReference type="InterPro" id="IPR012281">
    <property type="entry name" value="Phospholipid_synth_PlsX-like"/>
</dbReference>
<dbReference type="NCBIfam" id="TIGR00182">
    <property type="entry name" value="plsX"/>
    <property type="match status" value="1"/>
</dbReference>
<dbReference type="PANTHER" id="PTHR30100">
    <property type="entry name" value="FATTY ACID/PHOSPHOLIPID SYNTHESIS PROTEIN PLSX"/>
    <property type="match status" value="1"/>
</dbReference>
<dbReference type="PANTHER" id="PTHR30100:SF1">
    <property type="entry name" value="PHOSPHATE ACYLTRANSFERASE"/>
    <property type="match status" value="1"/>
</dbReference>
<dbReference type="Pfam" id="PF02504">
    <property type="entry name" value="FA_synthesis"/>
    <property type="match status" value="1"/>
</dbReference>
<dbReference type="PIRSF" id="PIRSF002465">
    <property type="entry name" value="Phsphlp_syn_PlsX"/>
    <property type="match status" value="1"/>
</dbReference>
<dbReference type="SUPFAM" id="SSF53659">
    <property type="entry name" value="Isocitrate/Isopropylmalate dehydrogenase-like"/>
    <property type="match status" value="1"/>
</dbReference>
<name>PLSX_METPP</name>
<reference key="1">
    <citation type="journal article" date="2007" name="J. Bacteriol.">
        <title>Whole-genome analysis of the methyl tert-butyl ether-degrading beta-proteobacterium Methylibium petroleiphilum PM1.</title>
        <authorList>
            <person name="Kane S.R."/>
            <person name="Chakicherla A.Y."/>
            <person name="Chain P.S.G."/>
            <person name="Schmidt R."/>
            <person name="Shin M.W."/>
            <person name="Legler T.C."/>
            <person name="Scow K.M."/>
            <person name="Larimer F.W."/>
            <person name="Lucas S.M."/>
            <person name="Richardson P.M."/>
            <person name="Hristova K.R."/>
        </authorList>
    </citation>
    <scope>NUCLEOTIDE SEQUENCE [LARGE SCALE GENOMIC DNA]</scope>
    <source>
        <strain>ATCC BAA-1232 / LMG 22953 / PM1</strain>
    </source>
</reference>
<feature type="chain" id="PRO_0000329240" description="Phosphate acyltransferase">
    <location>
        <begin position="1"/>
        <end position="368"/>
    </location>
</feature>
<comment type="function">
    <text evidence="1">Catalyzes the reversible formation of acyl-phosphate (acyl-PO(4)) from acyl-[acyl-carrier-protein] (acyl-ACP). This enzyme utilizes acyl-ACP as fatty acyl donor, but not acyl-CoA.</text>
</comment>
<comment type="catalytic activity">
    <reaction evidence="1">
        <text>a fatty acyl-[ACP] + phosphate = an acyl phosphate + holo-[ACP]</text>
        <dbReference type="Rhea" id="RHEA:42292"/>
        <dbReference type="Rhea" id="RHEA-COMP:9685"/>
        <dbReference type="Rhea" id="RHEA-COMP:14125"/>
        <dbReference type="ChEBI" id="CHEBI:43474"/>
        <dbReference type="ChEBI" id="CHEBI:59918"/>
        <dbReference type="ChEBI" id="CHEBI:64479"/>
        <dbReference type="ChEBI" id="CHEBI:138651"/>
        <dbReference type="EC" id="2.3.1.274"/>
    </reaction>
</comment>
<comment type="pathway">
    <text evidence="1">Lipid metabolism; phospholipid metabolism.</text>
</comment>
<comment type="subunit">
    <text evidence="1">Homodimer. Probably interacts with PlsY.</text>
</comment>
<comment type="subcellular location">
    <subcellularLocation>
        <location evidence="1">Cytoplasm</location>
    </subcellularLocation>
    <text evidence="1">Associated with the membrane possibly through PlsY.</text>
</comment>
<comment type="similarity">
    <text evidence="1">Belongs to the PlsX family.</text>
</comment>
<organism>
    <name type="scientific">Methylibium petroleiphilum (strain ATCC BAA-1232 / LMG 22953 / PM1)</name>
    <dbReference type="NCBI Taxonomy" id="420662"/>
    <lineage>
        <taxon>Bacteria</taxon>
        <taxon>Pseudomonadati</taxon>
        <taxon>Pseudomonadota</taxon>
        <taxon>Betaproteobacteria</taxon>
        <taxon>Burkholderiales</taxon>
        <taxon>Sphaerotilaceae</taxon>
        <taxon>Methylibium</taxon>
    </lineage>
</organism>
<proteinExistence type="inferred from homology"/>